<feature type="transit peptide" description="Mitochondrion" evidence="2">
    <location>
        <begin position="1"/>
        <end position="76"/>
    </location>
</feature>
<feature type="chain" id="PRO_0000043148" description="Mitochondrial import inner membrane translocase subunit TIM21">
    <location>
        <begin position="77"/>
        <end position="269"/>
    </location>
</feature>
<feature type="topological domain" description="Mitochondrial matrix" evidence="2">
    <location>
        <begin position="77"/>
        <end position="107"/>
    </location>
</feature>
<feature type="transmembrane region" description="Helical" evidence="2">
    <location>
        <begin position="108"/>
        <end position="128"/>
    </location>
</feature>
<feature type="topological domain" description="Mitochondrial intermembrane" evidence="2">
    <location>
        <begin position="129"/>
        <end position="269"/>
    </location>
</feature>
<accession>Q6CAQ9</accession>
<name>TIM21_YARLI</name>
<gene>
    <name type="primary">TIM21</name>
    <name type="ordered locus">YALI0D00715g</name>
</gene>
<protein>
    <recommendedName>
        <fullName>Mitochondrial import inner membrane translocase subunit TIM21</fullName>
    </recommendedName>
</protein>
<organism>
    <name type="scientific">Yarrowia lipolytica (strain CLIB 122 / E 150)</name>
    <name type="common">Yeast</name>
    <name type="synonym">Candida lipolytica</name>
    <dbReference type="NCBI Taxonomy" id="284591"/>
    <lineage>
        <taxon>Eukaryota</taxon>
        <taxon>Fungi</taxon>
        <taxon>Dikarya</taxon>
        <taxon>Ascomycota</taxon>
        <taxon>Saccharomycotina</taxon>
        <taxon>Dipodascomycetes</taxon>
        <taxon>Dipodascales</taxon>
        <taxon>Dipodascales incertae sedis</taxon>
        <taxon>Yarrowia</taxon>
    </lineage>
</organism>
<reference key="1">
    <citation type="journal article" date="2004" name="Nature">
        <title>Genome evolution in yeasts.</title>
        <authorList>
            <person name="Dujon B."/>
            <person name="Sherman D."/>
            <person name="Fischer G."/>
            <person name="Durrens P."/>
            <person name="Casaregola S."/>
            <person name="Lafontaine I."/>
            <person name="de Montigny J."/>
            <person name="Marck C."/>
            <person name="Neuveglise C."/>
            <person name="Talla E."/>
            <person name="Goffard N."/>
            <person name="Frangeul L."/>
            <person name="Aigle M."/>
            <person name="Anthouard V."/>
            <person name="Babour A."/>
            <person name="Barbe V."/>
            <person name="Barnay S."/>
            <person name="Blanchin S."/>
            <person name="Beckerich J.-M."/>
            <person name="Beyne E."/>
            <person name="Bleykasten C."/>
            <person name="Boisrame A."/>
            <person name="Boyer J."/>
            <person name="Cattolico L."/>
            <person name="Confanioleri F."/>
            <person name="de Daruvar A."/>
            <person name="Despons L."/>
            <person name="Fabre E."/>
            <person name="Fairhead C."/>
            <person name="Ferry-Dumazet H."/>
            <person name="Groppi A."/>
            <person name="Hantraye F."/>
            <person name="Hennequin C."/>
            <person name="Jauniaux N."/>
            <person name="Joyet P."/>
            <person name="Kachouri R."/>
            <person name="Kerrest A."/>
            <person name="Koszul R."/>
            <person name="Lemaire M."/>
            <person name="Lesur I."/>
            <person name="Ma L."/>
            <person name="Muller H."/>
            <person name="Nicaud J.-M."/>
            <person name="Nikolski M."/>
            <person name="Oztas S."/>
            <person name="Ozier-Kalogeropoulos O."/>
            <person name="Pellenz S."/>
            <person name="Potier S."/>
            <person name="Richard G.-F."/>
            <person name="Straub M.-L."/>
            <person name="Suleau A."/>
            <person name="Swennen D."/>
            <person name="Tekaia F."/>
            <person name="Wesolowski-Louvel M."/>
            <person name="Westhof E."/>
            <person name="Wirth B."/>
            <person name="Zeniou-Meyer M."/>
            <person name="Zivanovic Y."/>
            <person name="Bolotin-Fukuhara M."/>
            <person name="Thierry A."/>
            <person name="Bouchier C."/>
            <person name="Caudron B."/>
            <person name="Scarpelli C."/>
            <person name="Gaillardin C."/>
            <person name="Weissenbach J."/>
            <person name="Wincker P."/>
            <person name="Souciet J.-L."/>
        </authorList>
    </citation>
    <scope>NUCLEOTIDE SEQUENCE [LARGE SCALE GENOMIC DNA]</scope>
    <source>
        <strain>CLIB 122 / E 150</strain>
    </source>
</reference>
<evidence type="ECO:0000250" key="1"/>
<evidence type="ECO:0000255" key="2"/>
<evidence type="ECO:0000305" key="3"/>
<comment type="function">
    <text evidence="1">Essential component of the TIM23 complex, a complex that mediates the translocation of transit peptide-containing proteins across the mitochondrial inner membrane. Required to keep the TOM and the TIM23 complexes in close contact. At some point, it is released from the TOM23 complex to allow protein translocation into the mitochondrial matrix (By similarity).</text>
</comment>
<comment type="subunit">
    <text evidence="1">Component of the TIM23 complex, at least composed of TIM23, TIM17, TIM50 and TIM21.</text>
</comment>
<comment type="subcellular location">
    <subcellularLocation>
        <location evidence="1">Mitochondrion inner membrane</location>
        <topology evidence="1">Single-pass membrane protein</topology>
    </subcellularLocation>
</comment>
<comment type="similarity">
    <text evidence="3">Belongs to the TIM21 family.</text>
</comment>
<sequence>MLTRPLLALSRPMALGALRPAVLVRTLTTAGPTTTVRSTPIITPSHLSTLSRSTPFVSNCTLSLLKRSFHVSSDARSAAKAEGKPKVSAYEKANMRLAKIGVFFQLSWYLGIILAALGLFGLVWYYLIMELVMPSGDVRIFNRAFKEIEKNEDVMRVLGGQLSSMGEGGGGRWGRNQPPVSKRGIDKYGREHIWMNFYVSGDINEGRAKLELVQNTDSKLSSERFVYRYFVVDIPGHKRIYIAGNAAEKMEKKKSTGWLGVNWGKSDDE</sequence>
<keyword id="KW-0472">Membrane</keyword>
<keyword id="KW-0496">Mitochondrion</keyword>
<keyword id="KW-0999">Mitochondrion inner membrane</keyword>
<keyword id="KW-0653">Protein transport</keyword>
<keyword id="KW-1185">Reference proteome</keyword>
<keyword id="KW-0809">Transit peptide</keyword>
<keyword id="KW-0811">Translocation</keyword>
<keyword id="KW-0812">Transmembrane</keyword>
<keyword id="KW-1133">Transmembrane helix</keyword>
<keyword id="KW-0813">Transport</keyword>
<proteinExistence type="inferred from homology"/>
<dbReference type="EMBL" id="CR382130">
    <property type="protein sequence ID" value="CAG80439.1"/>
    <property type="molecule type" value="Genomic_DNA"/>
</dbReference>
<dbReference type="RefSeq" id="XP_502253.1">
    <property type="nucleotide sequence ID" value="XM_502253.1"/>
</dbReference>
<dbReference type="SMR" id="Q6CAQ9"/>
<dbReference type="FunCoup" id="Q6CAQ9">
    <property type="interactions" value="255"/>
</dbReference>
<dbReference type="STRING" id="284591.Q6CAQ9"/>
<dbReference type="EnsemblFungi" id="CAG80439">
    <property type="protein sequence ID" value="CAG80439"/>
    <property type="gene ID" value="YALI0_D00715g"/>
</dbReference>
<dbReference type="KEGG" id="yli:2910402"/>
<dbReference type="VEuPathDB" id="FungiDB:YALI0_D00715g"/>
<dbReference type="HOGENOM" id="CLU_089407_0_0_1"/>
<dbReference type="InParanoid" id="Q6CAQ9"/>
<dbReference type="OMA" id="HVESKQK"/>
<dbReference type="OrthoDB" id="117571at4891"/>
<dbReference type="Proteomes" id="UP000001300">
    <property type="component" value="Chromosome D"/>
</dbReference>
<dbReference type="GO" id="GO:0005744">
    <property type="term" value="C:TIM23 mitochondrial import inner membrane translocase complex"/>
    <property type="evidence" value="ECO:0000318"/>
    <property type="project" value="GO_Central"/>
</dbReference>
<dbReference type="GO" id="GO:0030150">
    <property type="term" value="P:protein import into mitochondrial matrix"/>
    <property type="evidence" value="ECO:0000318"/>
    <property type="project" value="GO_Central"/>
</dbReference>
<dbReference type="Gene3D" id="3.10.450.320">
    <property type="entry name" value="Mitochondrial import inner membrane translocase subunit Tim21"/>
    <property type="match status" value="1"/>
</dbReference>
<dbReference type="InterPro" id="IPR013261">
    <property type="entry name" value="Tim21"/>
</dbReference>
<dbReference type="InterPro" id="IPR038552">
    <property type="entry name" value="Tim21_IMS_sf"/>
</dbReference>
<dbReference type="PANTHER" id="PTHR13032">
    <property type="entry name" value="MITOCHONDRIAL IMPORT INNER MEMBRANE TRANSLOCASE SUBUNIT TIM21"/>
    <property type="match status" value="1"/>
</dbReference>
<dbReference type="PANTHER" id="PTHR13032:SF6">
    <property type="entry name" value="MITOCHONDRIAL IMPORT INNER MEMBRANE TRANSLOCASE SUBUNIT TIM21"/>
    <property type="match status" value="1"/>
</dbReference>
<dbReference type="Pfam" id="PF08294">
    <property type="entry name" value="TIM21"/>
    <property type="match status" value="1"/>
</dbReference>